<reference key="1">
    <citation type="journal article" date="2005" name="Mol. Biol. Evol.">
        <title>Evolution of bitter taste receptors in humans and apes.</title>
        <authorList>
            <person name="Fischer A."/>
            <person name="Gilad Y."/>
            <person name="Man O."/>
            <person name="Paeaebo S."/>
        </authorList>
    </citation>
    <scope>NUCLEOTIDE SEQUENCE [GENOMIC DNA]</scope>
</reference>
<sequence length="323" mass="36816">MATVNTDATDKDISKFKVTFTLVVSGIECITGILGSGFITAIYGAEWARGKTLPTGDRIMLMLSFSRLSLQIWMMLENIFSLLFRIVYNQNSVYILFKVITVFLNHSNLWFAAWLKVFYCLRIANFNHPLFFLMKRKIIVLMPWLLRLSVLVSLSFSFPLSRDVFNVYVNSSIPIPSSNSTEKKYFSETNMVNLVFFYNMGIFVPLIMFILAATLLILSLKRHTLHMGSNATGSRDPSMKAHIGAIKATSYFLILYIFNAIALFLSMSNIFDTYSSWNILCKIIMAAYPAGHSVQLILGNPGLRRAWKRFQHQVPLYLKGQTL</sequence>
<gene>
    <name type="primary">TAS2R40</name>
</gene>
<protein>
    <recommendedName>
        <fullName>Taste receptor type 2 member 40</fullName>
        <shortName>T2R40</shortName>
    </recommendedName>
</protein>
<organism>
    <name type="scientific">Pan troglodytes</name>
    <name type="common">Chimpanzee</name>
    <dbReference type="NCBI Taxonomy" id="9598"/>
    <lineage>
        <taxon>Eukaryota</taxon>
        <taxon>Metazoa</taxon>
        <taxon>Chordata</taxon>
        <taxon>Craniata</taxon>
        <taxon>Vertebrata</taxon>
        <taxon>Euteleostomi</taxon>
        <taxon>Mammalia</taxon>
        <taxon>Eutheria</taxon>
        <taxon>Euarchontoglires</taxon>
        <taxon>Primates</taxon>
        <taxon>Haplorrhini</taxon>
        <taxon>Catarrhini</taxon>
        <taxon>Hominidae</taxon>
        <taxon>Pan</taxon>
    </lineage>
</organism>
<evidence type="ECO:0000250" key="1"/>
<evidence type="ECO:0000255" key="2"/>
<evidence type="ECO:0000305" key="3"/>
<feature type="chain" id="PRO_0000082290" description="Taste receptor type 2 member 40">
    <location>
        <begin position="1"/>
        <end position="323"/>
    </location>
</feature>
<feature type="topological domain" description="Extracellular" evidence="2">
    <location>
        <begin position="1"/>
        <end position="14"/>
    </location>
</feature>
<feature type="transmembrane region" description="Helical; Name=1" evidence="2">
    <location>
        <begin position="15"/>
        <end position="35"/>
    </location>
</feature>
<feature type="topological domain" description="Cytoplasmic" evidence="2">
    <location>
        <begin position="36"/>
        <end position="58"/>
    </location>
</feature>
<feature type="transmembrane region" description="Helical; Name=2" evidence="2">
    <location>
        <begin position="59"/>
        <end position="79"/>
    </location>
</feature>
<feature type="topological domain" description="Extracellular" evidence="2">
    <location>
        <begin position="80"/>
        <end position="100"/>
    </location>
</feature>
<feature type="transmembrane region" description="Helical; Name=3" evidence="2">
    <location>
        <begin position="101"/>
        <end position="121"/>
    </location>
</feature>
<feature type="topological domain" description="Cytoplasmic" evidence="2">
    <location>
        <begin position="122"/>
        <end position="140"/>
    </location>
</feature>
<feature type="transmembrane region" description="Helical; Name=4" evidence="2">
    <location>
        <begin position="141"/>
        <end position="162"/>
    </location>
</feature>
<feature type="topological domain" description="Extracellular" evidence="2">
    <location>
        <begin position="163"/>
        <end position="190"/>
    </location>
</feature>
<feature type="transmembrane region" description="Helical; Name=5" evidence="2">
    <location>
        <begin position="191"/>
        <end position="211"/>
    </location>
</feature>
<feature type="topological domain" description="Cytoplasmic" evidence="2">
    <location>
        <begin position="212"/>
        <end position="247"/>
    </location>
</feature>
<feature type="transmembrane region" description="Helical; Name=6" evidence="2">
    <location>
        <begin position="248"/>
        <end position="268"/>
    </location>
</feature>
<feature type="topological domain" description="Extracellular" evidence="2">
    <location>
        <begin position="269"/>
        <end position="276"/>
    </location>
</feature>
<feature type="transmembrane region" description="Helical; Name=7" evidence="2">
    <location>
        <begin position="277"/>
        <end position="297"/>
    </location>
</feature>
<feature type="topological domain" description="Cytoplasmic" evidence="2">
    <location>
        <begin position="298"/>
        <end position="323"/>
    </location>
</feature>
<feature type="glycosylation site" description="N-linked (GlcNAc...) asparagine" evidence="2">
    <location>
        <position position="170"/>
    </location>
</feature>
<feature type="glycosylation site" description="N-linked (GlcNAc...) asparagine" evidence="2">
    <location>
        <position position="179"/>
    </location>
</feature>
<keyword id="KW-0297">G-protein coupled receptor</keyword>
<keyword id="KW-0325">Glycoprotein</keyword>
<keyword id="KW-0472">Membrane</keyword>
<keyword id="KW-0675">Receptor</keyword>
<keyword id="KW-1185">Reference proteome</keyword>
<keyword id="KW-0716">Sensory transduction</keyword>
<keyword id="KW-0919">Taste</keyword>
<keyword id="KW-0807">Transducer</keyword>
<keyword id="KW-0812">Transmembrane</keyword>
<keyword id="KW-1133">Transmembrane helix</keyword>
<comment type="function">
    <text evidence="1">Gustducin-coupled receptor implicated in the perception of bitter compounds in the oral cavity and the gastrointestinal tract. Signals through PLCB2 and the calcium-regulated cation channel TRPM5 (By similarity).</text>
</comment>
<comment type="subcellular location">
    <subcellularLocation>
        <location>Membrane</location>
        <topology>Multi-pass membrane protein</topology>
    </subcellularLocation>
</comment>
<comment type="miscellaneous">
    <text>Several bitter taste receptors are expressed in a single taste receptor cell.</text>
</comment>
<comment type="similarity">
    <text evidence="3">Belongs to the G-protein coupled receptor T2R family.</text>
</comment>
<accession>Q646B1</accession>
<proteinExistence type="inferred from homology"/>
<dbReference type="EMBL" id="AY724892">
    <property type="protein sequence ID" value="AAU21108.1"/>
    <property type="molecule type" value="Genomic_DNA"/>
</dbReference>
<dbReference type="RefSeq" id="NP_001009129.1">
    <property type="nucleotide sequence ID" value="NM_001009129.1"/>
</dbReference>
<dbReference type="RefSeq" id="XP_016800932.1">
    <property type="nucleotide sequence ID" value="XM_016945443.1"/>
</dbReference>
<dbReference type="SMR" id="Q646B1"/>
<dbReference type="FunCoup" id="Q646B1">
    <property type="interactions" value="306"/>
</dbReference>
<dbReference type="GlyCosmos" id="Q646B1">
    <property type="glycosylation" value="2 sites, No reported glycans"/>
</dbReference>
<dbReference type="PaxDb" id="9598-ENSPTRP00000054248"/>
<dbReference type="Ensembl" id="ENSPTRT00000061705.3">
    <property type="protein sequence ID" value="ENSPTRP00000054248.2"/>
    <property type="gene ID" value="ENSPTRG00000032460.4"/>
</dbReference>
<dbReference type="Ensembl" id="ENSPTRT00000102659.1">
    <property type="protein sequence ID" value="ENSPTRP00000077621.1"/>
    <property type="gene ID" value="ENSPTRG00000046948.1"/>
</dbReference>
<dbReference type="GeneID" id="472611"/>
<dbReference type="KEGG" id="ptr:472611"/>
<dbReference type="CTD" id="259286"/>
<dbReference type="VGNC" id="VGNC:8774">
    <property type="gene designation" value="TAS2R40"/>
</dbReference>
<dbReference type="eggNOG" id="ENOG502SKRK">
    <property type="taxonomic scope" value="Eukaryota"/>
</dbReference>
<dbReference type="GeneTree" id="ENSGT01100000263477"/>
<dbReference type="HOGENOM" id="CLU_072337_3_0_1"/>
<dbReference type="InParanoid" id="Q646B1"/>
<dbReference type="OMA" id="NFTHPLF"/>
<dbReference type="OrthoDB" id="10120at9604"/>
<dbReference type="TreeFam" id="TF335891"/>
<dbReference type="Proteomes" id="UP000002277">
    <property type="component" value="Chromosome 7"/>
</dbReference>
<dbReference type="GO" id="GO:0016020">
    <property type="term" value="C:membrane"/>
    <property type="evidence" value="ECO:0000318"/>
    <property type="project" value="GO_Central"/>
</dbReference>
<dbReference type="GO" id="GO:0005886">
    <property type="term" value="C:plasma membrane"/>
    <property type="evidence" value="ECO:0007669"/>
    <property type="project" value="UniProtKB-ARBA"/>
</dbReference>
<dbReference type="GO" id="GO:0033038">
    <property type="term" value="F:bitter taste receptor activity"/>
    <property type="evidence" value="ECO:0000318"/>
    <property type="project" value="GO_Central"/>
</dbReference>
<dbReference type="GO" id="GO:0004930">
    <property type="term" value="F:G protein-coupled receptor activity"/>
    <property type="evidence" value="ECO:0007669"/>
    <property type="project" value="UniProtKB-KW"/>
</dbReference>
<dbReference type="GO" id="GO:0001580">
    <property type="term" value="P:detection of chemical stimulus involved in sensory perception of bitter taste"/>
    <property type="evidence" value="ECO:0000318"/>
    <property type="project" value="GO_Central"/>
</dbReference>
<dbReference type="FunFam" id="1.20.1070.10:FF:000055">
    <property type="entry name" value="Taste receptor type 2"/>
    <property type="match status" value="1"/>
</dbReference>
<dbReference type="InterPro" id="IPR007960">
    <property type="entry name" value="TAS2R"/>
</dbReference>
<dbReference type="PANTHER" id="PTHR11394">
    <property type="entry name" value="TASTE RECEPTOR TYPE 2"/>
    <property type="match status" value="1"/>
</dbReference>
<dbReference type="PANTHER" id="PTHR11394:SF47">
    <property type="entry name" value="TASTE RECEPTOR TYPE 2 MEMBER 40"/>
    <property type="match status" value="1"/>
</dbReference>
<dbReference type="Pfam" id="PF05296">
    <property type="entry name" value="TAS2R"/>
    <property type="match status" value="1"/>
</dbReference>
<dbReference type="SUPFAM" id="SSF81321">
    <property type="entry name" value="Family A G protein-coupled receptor-like"/>
    <property type="match status" value="1"/>
</dbReference>
<name>T2R40_PANTR</name>